<keyword id="KW-0963">Cytoplasm</keyword>
<keyword id="KW-0238">DNA-binding</keyword>
<keyword id="KW-0804">Transcription</keyword>
<keyword id="KW-0805">Transcription regulation</keyword>
<reference key="1">
    <citation type="journal article" date="2009" name="J. Bacteriol.">
        <title>Complete genome sequence of the extremophilic Bacillus cereus strain Q1 with industrial applications.</title>
        <authorList>
            <person name="Xiong Z."/>
            <person name="Jiang Y."/>
            <person name="Qi D."/>
            <person name="Lu H."/>
            <person name="Yang F."/>
            <person name="Yang J."/>
            <person name="Chen L."/>
            <person name="Sun L."/>
            <person name="Xu X."/>
            <person name="Xue Y."/>
            <person name="Zhu Y."/>
            <person name="Jin Q."/>
        </authorList>
    </citation>
    <scope>NUCLEOTIDE SEQUENCE [LARGE SCALE GENOMIC DNA]</scope>
    <source>
        <strain>Q1</strain>
    </source>
</reference>
<feature type="chain" id="PRO_1000200077" description="Probable transcriptional regulatory protein BCQ_0605">
    <location>
        <begin position="1"/>
        <end position="239"/>
    </location>
</feature>
<comment type="subcellular location">
    <subcellularLocation>
        <location evidence="1">Cytoplasm</location>
    </subcellularLocation>
</comment>
<comment type="similarity">
    <text evidence="1">Belongs to the TACO1 family. YeeN subfamily.</text>
</comment>
<protein>
    <recommendedName>
        <fullName evidence="1">Probable transcriptional regulatory protein BCQ_0605</fullName>
    </recommendedName>
</protein>
<proteinExistence type="inferred from homology"/>
<name>Y605_BACCQ</name>
<gene>
    <name type="ordered locus">BCQ_0605</name>
</gene>
<organism>
    <name type="scientific">Bacillus cereus (strain Q1)</name>
    <dbReference type="NCBI Taxonomy" id="361100"/>
    <lineage>
        <taxon>Bacteria</taxon>
        <taxon>Bacillati</taxon>
        <taxon>Bacillota</taxon>
        <taxon>Bacilli</taxon>
        <taxon>Bacillales</taxon>
        <taxon>Bacillaceae</taxon>
        <taxon>Bacillus</taxon>
        <taxon>Bacillus cereus group</taxon>
    </lineage>
</organism>
<sequence>MGRKWNNIKDKKASKDANTSRIYAKFGREIYVAAKQGEPDPESNQALRVVLERAKTYNVPRTIIDRAVEKAKGGSEENYDELRYEGFGPNGAMVIVDTLTNNVNRTAADVRAAFSKNGGNMGVNGSVAYMFDATAVIGLEGKTSDEVLEILMEADVDARDILEEEDAVIVYAEPDQFHAVQSALKDAGVEEFTVAELTMLAQNDVTLPEDAQAQFEKMVDALEDLEDVQQVYHNVDLGE</sequence>
<dbReference type="EMBL" id="CP000227">
    <property type="protein sequence ID" value="ACM11059.1"/>
    <property type="molecule type" value="Genomic_DNA"/>
</dbReference>
<dbReference type="SMR" id="B9J3R0"/>
<dbReference type="KEGG" id="bcq:BCQ_0605"/>
<dbReference type="HOGENOM" id="CLU_062974_2_0_9"/>
<dbReference type="Proteomes" id="UP000000441">
    <property type="component" value="Chromosome"/>
</dbReference>
<dbReference type="GO" id="GO:0005829">
    <property type="term" value="C:cytosol"/>
    <property type="evidence" value="ECO:0007669"/>
    <property type="project" value="TreeGrafter"/>
</dbReference>
<dbReference type="GO" id="GO:0003677">
    <property type="term" value="F:DNA binding"/>
    <property type="evidence" value="ECO:0007669"/>
    <property type="project" value="UniProtKB-UniRule"/>
</dbReference>
<dbReference type="GO" id="GO:0006355">
    <property type="term" value="P:regulation of DNA-templated transcription"/>
    <property type="evidence" value="ECO:0007669"/>
    <property type="project" value="UniProtKB-UniRule"/>
</dbReference>
<dbReference type="FunFam" id="1.10.10.200:FF:000003">
    <property type="entry name" value="Probable transcriptional regulatory protein YeeN"/>
    <property type="match status" value="1"/>
</dbReference>
<dbReference type="FunFam" id="3.30.70.980:FF:000004">
    <property type="entry name" value="Probable transcriptional regulatory protein YeeN"/>
    <property type="match status" value="1"/>
</dbReference>
<dbReference type="Gene3D" id="1.10.10.200">
    <property type="match status" value="1"/>
</dbReference>
<dbReference type="Gene3D" id="3.30.70.980">
    <property type="match status" value="2"/>
</dbReference>
<dbReference type="HAMAP" id="MF_00693">
    <property type="entry name" value="Transcrip_reg_TACO1"/>
    <property type="match status" value="1"/>
</dbReference>
<dbReference type="HAMAP" id="MF_00918">
    <property type="entry name" value="Transcrip_reg_TACO1_YeeN"/>
    <property type="match status" value="1"/>
</dbReference>
<dbReference type="InterPro" id="IPR017856">
    <property type="entry name" value="Integrase-like_N"/>
</dbReference>
<dbReference type="InterPro" id="IPR048300">
    <property type="entry name" value="TACO1_YebC-like_2nd/3rd_dom"/>
</dbReference>
<dbReference type="InterPro" id="IPR049083">
    <property type="entry name" value="TACO1_YebC_N"/>
</dbReference>
<dbReference type="InterPro" id="IPR002876">
    <property type="entry name" value="Transcrip_reg_TACO1-like"/>
</dbReference>
<dbReference type="InterPro" id="IPR026564">
    <property type="entry name" value="Transcrip_reg_TACO1-like_dom3"/>
</dbReference>
<dbReference type="InterPro" id="IPR026562">
    <property type="entry name" value="Transcrip_reg_TACO1_YeeN"/>
</dbReference>
<dbReference type="InterPro" id="IPR029072">
    <property type="entry name" value="YebC-like"/>
</dbReference>
<dbReference type="NCBIfam" id="NF001030">
    <property type="entry name" value="PRK00110.1"/>
    <property type="match status" value="1"/>
</dbReference>
<dbReference type="NCBIfam" id="NF009044">
    <property type="entry name" value="PRK12378.1"/>
    <property type="match status" value="1"/>
</dbReference>
<dbReference type="NCBIfam" id="TIGR01033">
    <property type="entry name" value="YebC/PmpR family DNA-binding transcriptional regulator"/>
    <property type="match status" value="1"/>
</dbReference>
<dbReference type="PANTHER" id="PTHR12532">
    <property type="entry name" value="TRANSLATIONAL ACTIVATOR OF CYTOCHROME C OXIDASE 1"/>
    <property type="match status" value="1"/>
</dbReference>
<dbReference type="PANTHER" id="PTHR12532:SF0">
    <property type="entry name" value="TRANSLATIONAL ACTIVATOR OF CYTOCHROME C OXIDASE 1"/>
    <property type="match status" value="1"/>
</dbReference>
<dbReference type="Pfam" id="PF20772">
    <property type="entry name" value="TACO1_YebC_N"/>
    <property type="match status" value="1"/>
</dbReference>
<dbReference type="Pfam" id="PF01709">
    <property type="entry name" value="Transcrip_reg"/>
    <property type="match status" value="1"/>
</dbReference>
<dbReference type="SUPFAM" id="SSF75625">
    <property type="entry name" value="YebC-like"/>
    <property type="match status" value="1"/>
</dbReference>
<evidence type="ECO:0000255" key="1">
    <source>
        <dbReference type="HAMAP-Rule" id="MF_00918"/>
    </source>
</evidence>
<accession>B9J3R0</accession>